<gene>
    <name evidence="5" type="primary">dao</name>
    <name type="ordered locus">MT1956</name>
</gene>
<feature type="chain" id="PRO_0000427025" description="D-amino-acid oxidase">
    <location>
        <begin position="1"/>
        <end position="320"/>
    </location>
</feature>
<feature type="binding site" evidence="3">
    <location>
        <position position="13"/>
    </location>
    <ligand>
        <name>FAD</name>
        <dbReference type="ChEBI" id="CHEBI:57692"/>
    </ligand>
</feature>
<feature type="binding site" evidence="3">
    <location>
        <position position="14"/>
    </location>
    <ligand>
        <name>FAD</name>
        <dbReference type="ChEBI" id="CHEBI:57692"/>
    </ligand>
</feature>
<feature type="binding site" evidence="3">
    <location>
        <position position="15"/>
    </location>
    <ligand>
        <name>FAD</name>
        <dbReference type="ChEBI" id="CHEBI:57692"/>
    </ligand>
</feature>
<feature type="binding site" evidence="3">
    <location>
        <position position="42"/>
    </location>
    <ligand>
        <name>FAD</name>
        <dbReference type="ChEBI" id="CHEBI:57692"/>
    </ligand>
</feature>
<feature type="binding site" evidence="3">
    <location>
        <position position="43"/>
    </location>
    <ligand>
        <name>FAD</name>
        <dbReference type="ChEBI" id="CHEBI:57692"/>
    </ligand>
</feature>
<feature type="binding site" evidence="3">
    <location>
        <position position="44"/>
    </location>
    <ligand>
        <name>FAD</name>
        <dbReference type="ChEBI" id="CHEBI:57692"/>
    </ligand>
</feature>
<feature type="binding site" evidence="2">
    <location>
        <position position="48"/>
    </location>
    <ligand>
        <name>FAD</name>
        <dbReference type="ChEBI" id="CHEBI:57692"/>
    </ligand>
</feature>
<feature type="binding site" evidence="3">
    <location>
        <position position="49"/>
    </location>
    <ligand>
        <name>FAD</name>
        <dbReference type="ChEBI" id="CHEBI:57692"/>
    </ligand>
</feature>
<feature type="binding site" evidence="2">
    <location>
        <position position="220"/>
    </location>
    <ligand>
        <name>D-proline</name>
        <dbReference type="ChEBI" id="CHEBI:57726"/>
    </ligand>
</feature>
<feature type="binding site" evidence="3">
    <location>
        <position position="220"/>
    </location>
    <ligand>
        <name>D-serine</name>
        <dbReference type="ChEBI" id="CHEBI:35247"/>
    </ligand>
</feature>
<feature type="binding site" evidence="2">
    <location>
        <position position="274"/>
    </location>
    <ligand>
        <name>D-proline</name>
        <dbReference type="ChEBI" id="CHEBI:57726"/>
    </ligand>
</feature>
<feature type="binding site" evidence="3">
    <location>
        <position position="274"/>
    </location>
    <ligand>
        <name>D-serine</name>
        <dbReference type="ChEBI" id="CHEBI:35247"/>
    </ligand>
</feature>
<feature type="binding site" evidence="3">
    <location>
        <position position="274"/>
    </location>
    <ligand>
        <name>FAD</name>
        <dbReference type="ChEBI" id="CHEBI:57692"/>
    </ligand>
</feature>
<feature type="binding site" evidence="3">
    <location>
        <position position="299"/>
    </location>
    <ligand>
        <name>FAD</name>
        <dbReference type="ChEBI" id="CHEBI:57692"/>
    </ligand>
</feature>
<feature type="binding site" evidence="2">
    <location>
        <position position="300"/>
    </location>
    <ligand>
        <name>D-proline</name>
        <dbReference type="ChEBI" id="CHEBI:57726"/>
    </ligand>
</feature>
<feature type="binding site" evidence="3">
    <location>
        <position position="300"/>
    </location>
    <ligand>
        <name>D-serine</name>
        <dbReference type="ChEBI" id="CHEBI:35247"/>
    </ligand>
</feature>
<feature type="binding site" evidence="3">
    <location>
        <position position="300"/>
    </location>
    <ligand>
        <name>FAD</name>
        <dbReference type="ChEBI" id="CHEBI:57692"/>
    </ligand>
</feature>
<feature type="binding site" evidence="3">
    <location>
        <position position="302"/>
    </location>
    <ligand>
        <name>FAD</name>
        <dbReference type="ChEBI" id="CHEBI:57692"/>
    </ligand>
</feature>
<feature type="binding site" evidence="3">
    <location>
        <position position="304"/>
    </location>
    <ligand>
        <name>FAD</name>
        <dbReference type="ChEBI" id="CHEBI:57692"/>
    </ligand>
</feature>
<dbReference type="EC" id="1.4.3.3" evidence="4"/>
<dbReference type="EMBL" id="AE000516">
    <property type="protein sequence ID" value="AAK46227.1"/>
    <property type="molecule type" value="Genomic_DNA"/>
</dbReference>
<dbReference type="PIR" id="F70518">
    <property type="entry name" value="F70518"/>
</dbReference>
<dbReference type="RefSeq" id="WP_003899072.1">
    <property type="nucleotide sequence ID" value="NZ_KK341227.1"/>
</dbReference>
<dbReference type="SMR" id="P9WP26"/>
<dbReference type="KEGG" id="mtc:MT1956"/>
<dbReference type="PATRIC" id="fig|83331.31.peg.2105"/>
<dbReference type="HOGENOM" id="CLU_034311_0_0_11"/>
<dbReference type="Proteomes" id="UP000001020">
    <property type="component" value="Chromosome"/>
</dbReference>
<dbReference type="GO" id="GO:0005737">
    <property type="term" value="C:cytoplasm"/>
    <property type="evidence" value="ECO:0000250"/>
    <property type="project" value="UniProtKB"/>
</dbReference>
<dbReference type="GO" id="GO:0005576">
    <property type="term" value="C:extracellular region"/>
    <property type="evidence" value="ECO:0007669"/>
    <property type="project" value="UniProtKB-KW"/>
</dbReference>
<dbReference type="GO" id="GO:0009274">
    <property type="term" value="C:peptidoglycan-based cell wall"/>
    <property type="evidence" value="ECO:0000250"/>
    <property type="project" value="UniProtKB"/>
</dbReference>
<dbReference type="GO" id="GO:0003884">
    <property type="term" value="F:D-amino-acid oxidase activity"/>
    <property type="evidence" value="ECO:0000250"/>
    <property type="project" value="UniProtKB"/>
</dbReference>
<dbReference type="GO" id="GO:0071949">
    <property type="term" value="F:FAD binding"/>
    <property type="evidence" value="ECO:0000250"/>
    <property type="project" value="UniProtKB"/>
</dbReference>
<dbReference type="GO" id="GO:0019478">
    <property type="term" value="P:D-amino acid catabolic process"/>
    <property type="evidence" value="ECO:0000250"/>
    <property type="project" value="UniProtKB"/>
</dbReference>
<dbReference type="Gene3D" id="3.30.9.10">
    <property type="entry name" value="D-Amino Acid Oxidase, subunit A, domain 2"/>
    <property type="match status" value="1"/>
</dbReference>
<dbReference type="Gene3D" id="3.40.50.720">
    <property type="entry name" value="NAD(P)-binding Rossmann-like Domain"/>
    <property type="match status" value="1"/>
</dbReference>
<dbReference type="InterPro" id="IPR023209">
    <property type="entry name" value="DAO"/>
</dbReference>
<dbReference type="InterPro" id="IPR006076">
    <property type="entry name" value="FAD-dep_OxRdtase"/>
</dbReference>
<dbReference type="PANTHER" id="PTHR11530">
    <property type="entry name" value="D-AMINO ACID OXIDASE"/>
    <property type="match status" value="1"/>
</dbReference>
<dbReference type="PANTHER" id="PTHR11530:SF11">
    <property type="entry name" value="D-ASPARTATE OXIDASE"/>
    <property type="match status" value="1"/>
</dbReference>
<dbReference type="Pfam" id="PF01266">
    <property type="entry name" value="DAO"/>
    <property type="match status" value="1"/>
</dbReference>
<dbReference type="PIRSF" id="PIRSF000189">
    <property type="entry name" value="D-aa_oxidase"/>
    <property type="match status" value="1"/>
</dbReference>
<dbReference type="SUPFAM" id="SSF54373">
    <property type="entry name" value="FAD-linked reductases, C-terminal domain"/>
    <property type="match status" value="1"/>
</dbReference>
<dbReference type="SUPFAM" id="SSF51971">
    <property type="entry name" value="Nucleotide-binding domain"/>
    <property type="match status" value="1"/>
</dbReference>
<comment type="function">
    <text evidence="1 4">Catalyzes the oxidative deamination of D-amino acids with broad substrate specificity (By similarity). Enables the organism to utilize D-amino acids as a source of nutrients (By similarity).</text>
</comment>
<comment type="catalytic activity">
    <reaction evidence="4">
        <text>a D-alpha-amino acid + O2 + H2O = a 2-oxocarboxylate + H2O2 + NH4(+)</text>
        <dbReference type="Rhea" id="RHEA:21816"/>
        <dbReference type="ChEBI" id="CHEBI:15377"/>
        <dbReference type="ChEBI" id="CHEBI:15379"/>
        <dbReference type="ChEBI" id="CHEBI:16240"/>
        <dbReference type="ChEBI" id="CHEBI:28938"/>
        <dbReference type="ChEBI" id="CHEBI:35179"/>
        <dbReference type="ChEBI" id="CHEBI:59871"/>
        <dbReference type="EC" id="1.4.3.3"/>
    </reaction>
    <physiologicalReaction direction="left-to-right" evidence="4">
        <dbReference type="Rhea" id="RHEA:21817"/>
    </physiologicalReaction>
</comment>
<comment type="cofactor">
    <cofactor evidence="4">
        <name>FAD</name>
        <dbReference type="ChEBI" id="CHEBI:57692"/>
    </cofactor>
</comment>
<comment type="subcellular location">
    <subcellularLocation>
        <location evidence="1">Cytoplasm</location>
    </subcellularLocation>
    <subcellularLocation>
        <location evidence="1">Secreted</location>
        <location evidence="1">Cell wall</location>
    </subcellularLocation>
</comment>
<comment type="similarity">
    <text evidence="5">Belongs to the DAMOX/DASOX family.</text>
</comment>
<proteinExistence type="inferred from homology"/>
<accession>P9WP26</accession>
<accession>L0T817</accession>
<accession>O07727</accession>
<accession>Q7D7T4</accession>
<protein>
    <recommendedName>
        <fullName evidence="5">D-amino-acid oxidase</fullName>
        <shortName>DAAO</shortName>
        <shortName>DAMOX</shortName>
        <shortName>DAO</shortName>
        <ecNumber evidence="4">1.4.3.3</ecNumber>
    </recommendedName>
</protein>
<organism>
    <name type="scientific">Mycobacterium tuberculosis (strain CDC 1551 / Oshkosh)</name>
    <dbReference type="NCBI Taxonomy" id="83331"/>
    <lineage>
        <taxon>Bacteria</taxon>
        <taxon>Bacillati</taxon>
        <taxon>Actinomycetota</taxon>
        <taxon>Actinomycetes</taxon>
        <taxon>Mycobacteriales</taxon>
        <taxon>Mycobacteriaceae</taxon>
        <taxon>Mycobacterium</taxon>
        <taxon>Mycobacterium tuberculosis complex</taxon>
    </lineage>
</organism>
<sequence length="320" mass="34108">MAIGEQQVIVIGAGVSGLTSAICLAEAGWPVRVWAAALPQQTTSAVAGAVWGPRPKEPVAKVRGWIEQSLHVFRDLAKDPATGVRMTPALSVGDRIETGAMPPGLELIPDVRPADPADVPGGFRAGFHATLPMIDMPQYLDCLTQRLAATGCEIETRPLRSLAEAAEAAPIVINCAGLGARELAGDATVWPRFGQHVVLTNPGLEQLFIERTGGSEWICYFAHPQRVVCGGISIPGRWDPTPEPEITERILQRCRRIQPRLAEAAVIETITGLRPDRPSVRVEAEPIGRALCIHNYGHGGDGVTLSWGCAREVVNLVGGG</sequence>
<reference key="1">
    <citation type="journal article" date="2002" name="J. Bacteriol.">
        <title>Whole-genome comparison of Mycobacterium tuberculosis clinical and laboratory strains.</title>
        <authorList>
            <person name="Fleischmann R.D."/>
            <person name="Alland D."/>
            <person name="Eisen J.A."/>
            <person name="Carpenter L."/>
            <person name="White O."/>
            <person name="Peterson J.D."/>
            <person name="DeBoy R.T."/>
            <person name="Dodson R.J."/>
            <person name="Gwinn M.L."/>
            <person name="Haft D.H."/>
            <person name="Hickey E.K."/>
            <person name="Kolonay J.F."/>
            <person name="Nelson W.C."/>
            <person name="Umayam L.A."/>
            <person name="Ermolaeva M.D."/>
            <person name="Salzberg S.L."/>
            <person name="Delcher A."/>
            <person name="Utterback T.R."/>
            <person name="Weidman J.F."/>
            <person name="Khouri H.M."/>
            <person name="Gill J."/>
            <person name="Mikula A."/>
            <person name="Bishai W."/>
            <person name="Jacobs W.R. Jr."/>
            <person name="Venter J.C."/>
            <person name="Fraser C.M."/>
        </authorList>
    </citation>
    <scope>NUCLEOTIDE SEQUENCE [LARGE SCALE GENOMIC DNA]</scope>
    <source>
        <strain>CDC 1551 / Oshkosh</strain>
    </source>
</reference>
<keyword id="KW-0134">Cell wall</keyword>
<keyword id="KW-0963">Cytoplasm</keyword>
<keyword id="KW-0274">FAD</keyword>
<keyword id="KW-0285">Flavoprotein</keyword>
<keyword id="KW-0560">Oxidoreductase</keyword>
<keyword id="KW-1185">Reference proteome</keyword>
<keyword id="KW-0964">Secreted</keyword>
<evidence type="ECO:0000250" key="1">
    <source>
        <dbReference type="UniProtKB" id="A5U3S4"/>
    </source>
</evidence>
<evidence type="ECO:0000250" key="2">
    <source>
        <dbReference type="UniProtKB" id="P00371"/>
    </source>
</evidence>
<evidence type="ECO:0000250" key="3">
    <source>
        <dbReference type="UniProtKB" id="P14920"/>
    </source>
</evidence>
<evidence type="ECO:0000250" key="4">
    <source>
        <dbReference type="UniProtKB" id="Q1AYM8"/>
    </source>
</evidence>
<evidence type="ECO:0000305" key="5"/>
<name>DAO_MYCTO</name>